<dbReference type="EMBL" id="JT012917">
    <property type="status" value="NOT_ANNOTATED_CDS"/>
    <property type="molecule type" value="mRNA"/>
</dbReference>
<dbReference type="EMBL" id="JT013896">
    <property type="status" value="NOT_ANNOTATED_CDS"/>
    <property type="molecule type" value="mRNA"/>
</dbReference>
<dbReference type="OrthoDB" id="9802528at2759"/>
<dbReference type="GO" id="GO:0005576">
    <property type="term" value="C:extracellular region"/>
    <property type="evidence" value="ECO:0007669"/>
    <property type="project" value="UniProtKB-SubCell"/>
</dbReference>
<dbReference type="CDD" id="cd23582">
    <property type="entry name" value="TFP_LU_ECD_TRP"/>
    <property type="match status" value="1"/>
</dbReference>
<organism>
    <name type="scientific">Acropora millepora</name>
    <name type="common">Staghorn coral</name>
    <name type="synonym">Heteropora millepora</name>
    <dbReference type="NCBI Taxonomy" id="45264"/>
    <lineage>
        <taxon>Eukaryota</taxon>
        <taxon>Metazoa</taxon>
        <taxon>Cnidaria</taxon>
        <taxon>Anthozoa</taxon>
        <taxon>Hexacorallia</taxon>
        <taxon>Scleractinia</taxon>
        <taxon>Astrocoeniina</taxon>
        <taxon>Acroporidae</taxon>
        <taxon>Acropora</taxon>
    </lineage>
</organism>
<keyword id="KW-0903">Direct protein sequencing</keyword>
<keyword id="KW-0964">Secreted</keyword>
<keyword id="KW-0732">Signal</keyword>
<proteinExistence type="evidence at protein level"/>
<accession>B3EWZ7</accession>
<protein>
    <recommendedName>
        <fullName evidence="4">Threonine-rich protein</fullName>
    </recommendedName>
</protein>
<feature type="signal peptide" evidence="1">
    <location>
        <begin position="1"/>
        <end position="20"/>
    </location>
</feature>
<feature type="chain" id="PRO_0000429560" description="Threonine-rich protein" evidence="1">
    <location>
        <begin position="21"/>
        <end position="288" status="greater than"/>
    </location>
</feature>
<feature type="region of interest" description="Disordered" evidence="2">
    <location>
        <begin position="141"/>
        <end position="260"/>
    </location>
</feature>
<feature type="compositionally biased region" description="Polar residues" evidence="2">
    <location>
        <begin position="141"/>
        <end position="150"/>
    </location>
</feature>
<feature type="compositionally biased region" description="Low complexity" evidence="2">
    <location>
        <begin position="151"/>
        <end position="253"/>
    </location>
</feature>
<feature type="non-terminal residue" evidence="5">
    <location>
        <position position="288"/>
    </location>
</feature>
<reference evidence="5" key="1">
    <citation type="journal article" date="2012" name="Mol. Ecol.">
        <title>Whole transcriptome analysis of the coral Acropora millepora reveals complex responses to CO(2)-driven acidification during the initiation of calcification.</title>
        <authorList>
            <person name="Moya A."/>
            <person name="Huisman L."/>
            <person name="Ball E.E."/>
            <person name="Hayward D.C."/>
            <person name="Grasso L.C."/>
            <person name="Chua C.M."/>
            <person name="Woo H.N."/>
            <person name="Gattuso J.P."/>
            <person name="Foret S."/>
            <person name="Miller D.J."/>
        </authorList>
    </citation>
    <scope>NUCLEOTIDE SEQUENCE [MRNA]</scope>
</reference>
<reference evidence="5" key="2">
    <citation type="journal article" date="2013" name="Mol. Biol. Evol.">
        <title>The skeletal proteome of the coral Acropora millepora: the evolution of calcification by co-option and domain shuffling.</title>
        <authorList>
            <person name="Ramos-Silva P."/>
            <person name="Kaandorp J."/>
            <person name="Huisman L."/>
            <person name="Marie B."/>
            <person name="Zanella-Cleon I."/>
            <person name="Guichard N."/>
            <person name="Miller D.J."/>
            <person name="Marin F."/>
        </authorList>
    </citation>
    <scope>PROTEIN SEQUENCE OF 28-46 AND 70-98</scope>
    <scope>TISSUE SPECIFICITY</scope>
    <scope>IDENTIFICATION BY MASS SPECTROMETRY</scope>
</reference>
<sequence length="288" mass="29712">MKAFLLSLATLLACIVLTESAPHSADVREEAFDALVRSYLQAVQRDSHMENLTCAECQGVTERNCTLGERQVQCNPGEVCTTLEAFNLDTGTTTVTRGCFNITGLNCGDNPGCGALNTTGNIQSCDQFCCNTSLCNAGTLTTVTPQTTDGNTTTEAPTSTEPPTNASTEAPTSTEPPTNASTEAPTSTEPPTNASTEAPTTTEAPTTTEAPTTTEAPTTTETPTTTETPTTTAAPTTTETPTTTAAPTTTPAPTTTPAPTTPFFCNATLAGLSGTFTSPNFQLITQTG</sequence>
<comment type="subcellular location">
    <subcellularLocation>
        <location evidence="6">Secreted</location>
    </subcellularLocation>
</comment>
<comment type="tissue specificity">
    <text evidence="3">Component of the acid-insoluble and acid-soluble organic matrix of the aragonitic skeleton (at protein level).</text>
</comment>
<name>TRP_ACRMI</name>
<evidence type="ECO:0000255" key="1"/>
<evidence type="ECO:0000256" key="2">
    <source>
        <dbReference type="SAM" id="MobiDB-lite"/>
    </source>
</evidence>
<evidence type="ECO:0000269" key="3">
    <source>
    </source>
</evidence>
<evidence type="ECO:0000303" key="4">
    <source>
    </source>
</evidence>
<evidence type="ECO:0000305" key="5"/>
<evidence type="ECO:0000305" key="6">
    <source>
    </source>
</evidence>